<sequence>MSLLDYFKSKKKPSTAVMAKERLQIIVAHQRGQRDTPDYFPQMKQEIIAVIRKYVQISDDQVSVQLDQNDANLSVLELNVTLPDR</sequence>
<proteinExistence type="inferred from homology"/>
<accession>B8E7G2</accession>
<comment type="function">
    <text evidence="1">Prevents the cell division inhibition by proteins MinC and MinD at internal division sites while permitting inhibition at polar sites. This ensures cell division at the proper site by restricting the formation of a division septum at the midpoint of the long axis of the cell.</text>
</comment>
<comment type="similarity">
    <text evidence="1">Belongs to the MinE family.</text>
</comment>
<feature type="chain" id="PRO_1000191296" description="Cell division topological specificity factor">
    <location>
        <begin position="1"/>
        <end position="85"/>
    </location>
</feature>
<evidence type="ECO:0000255" key="1">
    <source>
        <dbReference type="HAMAP-Rule" id="MF_00262"/>
    </source>
</evidence>
<organism>
    <name type="scientific">Shewanella baltica (strain OS223)</name>
    <dbReference type="NCBI Taxonomy" id="407976"/>
    <lineage>
        <taxon>Bacteria</taxon>
        <taxon>Pseudomonadati</taxon>
        <taxon>Pseudomonadota</taxon>
        <taxon>Gammaproteobacteria</taxon>
        <taxon>Alteromonadales</taxon>
        <taxon>Shewanellaceae</taxon>
        <taxon>Shewanella</taxon>
    </lineage>
</organism>
<keyword id="KW-0131">Cell cycle</keyword>
<keyword id="KW-0132">Cell division</keyword>
<dbReference type="EMBL" id="CP001252">
    <property type="protein sequence ID" value="ACK46921.1"/>
    <property type="molecule type" value="Genomic_DNA"/>
</dbReference>
<dbReference type="RefSeq" id="WP_006081361.1">
    <property type="nucleotide sequence ID" value="NC_011663.1"/>
</dbReference>
<dbReference type="SMR" id="B8E7G2"/>
<dbReference type="GeneID" id="11772106"/>
<dbReference type="KEGG" id="sbp:Sbal223_2426"/>
<dbReference type="HOGENOM" id="CLU_137929_2_2_6"/>
<dbReference type="Proteomes" id="UP000002507">
    <property type="component" value="Chromosome"/>
</dbReference>
<dbReference type="GO" id="GO:0051301">
    <property type="term" value="P:cell division"/>
    <property type="evidence" value="ECO:0007669"/>
    <property type="project" value="UniProtKB-KW"/>
</dbReference>
<dbReference type="GO" id="GO:0032955">
    <property type="term" value="P:regulation of division septum assembly"/>
    <property type="evidence" value="ECO:0007669"/>
    <property type="project" value="InterPro"/>
</dbReference>
<dbReference type="FunFam" id="3.30.1070.10:FF:000001">
    <property type="entry name" value="Cell division topological specificity factor"/>
    <property type="match status" value="1"/>
</dbReference>
<dbReference type="Gene3D" id="3.30.1070.10">
    <property type="entry name" value="Cell division topological specificity factor MinE"/>
    <property type="match status" value="1"/>
</dbReference>
<dbReference type="HAMAP" id="MF_00262">
    <property type="entry name" value="MinE"/>
    <property type="match status" value="1"/>
</dbReference>
<dbReference type="InterPro" id="IPR005527">
    <property type="entry name" value="MinE"/>
</dbReference>
<dbReference type="InterPro" id="IPR036707">
    <property type="entry name" value="MinE_sf"/>
</dbReference>
<dbReference type="NCBIfam" id="TIGR01215">
    <property type="entry name" value="minE"/>
    <property type="match status" value="1"/>
</dbReference>
<dbReference type="NCBIfam" id="NF001422">
    <property type="entry name" value="PRK00296.1"/>
    <property type="match status" value="1"/>
</dbReference>
<dbReference type="Pfam" id="PF03776">
    <property type="entry name" value="MinE"/>
    <property type="match status" value="1"/>
</dbReference>
<dbReference type="SUPFAM" id="SSF55229">
    <property type="entry name" value="Cell division protein MinE topological specificity domain"/>
    <property type="match status" value="1"/>
</dbReference>
<name>MINE_SHEB2</name>
<gene>
    <name evidence="1" type="primary">minE</name>
    <name type="ordered locus">Sbal223_2426</name>
</gene>
<reference key="1">
    <citation type="submission" date="2008-12" db="EMBL/GenBank/DDBJ databases">
        <title>Complete sequence of chromosome of Shewanella baltica OS223.</title>
        <authorList>
            <consortium name="US DOE Joint Genome Institute"/>
            <person name="Lucas S."/>
            <person name="Copeland A."/>
            <person name="Lapidus A."/>
            <person name="Glavina del Rio T."/>
            <person name="Dalin E."/>
            <person name="Tice H."/>
            <person name="Bruce D."/>
            <person name="Goodwin L."/>
            <person name="Pitluck S."/>
            <person name="Chertkov O."/>
            <person name="Meincke L."/>
            <person name="Brettin T."/>
            <person name="Detter J.C."/>
            <person name="Han C."/>
            <person name="Kuske C.R."/>
            <person name="Larimer F."/>
            <person name="Land M."/>
            <person name="Hauser L."/>
            <person name="Kyrpides N."/>
            <person name="Ovchinnikova G."/>
            <person name="Brettar I."/>
            <person name="Rodrigues J."/>
            <person name="Konstantinidis K."/>
            <person name="Tiedje J."/>
        </authorList>
    </citation>
    <scope>NUCLEOTIDE SEQUENCE [LARGE SCALE GENOMIC DNA]</scope>
    <source>
        <strain>OS223</strain>
    </source>
</reference>
<protein>
    <recommendedName>
        <fullName evidence="1">Cell division topological specificity factor</fullName>
    </recommendedName>
</protein>